<comment type="subcellular location">
    <subcellularLocation>
        <location evidence="4">Host membrane</location>
        <topology evidence="4">Single-pass membrane protein</topology>
    </subcellularLocation>
    <subcellularLocation>
        <location evidence="2">Virion</location>
    </subcellularLocation>
</comment>
<comment type="induction">
    <text evidence="3">Expressed in the late phase of the viral replicative cycle.</text>
</comment>
<comment type="similarity">
    <text evidence="4">Belongs to the asfivirus E146L family.</text>
</comment>
<sequence>MGGTTDFVLSITIVLVILIIIAFIWYNFTGWSPFKYSKGNTVTFKTPDESSIAYMRFRNCIFTFTDPKGSLHSIDVTEVLNNMAKGFRDAQNPPSSFTLGGHCQAPLNAFSFVLPGVNDRATVATADDAKKWENCDATLTGLQRII</sequence>
<dbReference type="EMBL" id="U18466">
    <property type="protein sequence ID" value="AAA65357.1"/>
    <property type="molecule type" value="Genomic_DNA"/>
</dbReference>
<dbReference type="RefSeq" id="NP_042821.1">
    <property type="nucleotide sequence ID" value="NC_001659.2"/>
</dbReference>
<dbReference type="SMR" id="Q65197"/>
<dbReference type="GeneID" id="22220357"/>
<dbReference type="KEGG" id="vg:22220357"/>
<dbReference type="Proteomes" id="UP000000624">
    <property type="component" value="Segment"/>
</dbReference>
<dbReference type="GO" id="GO:0033644">
    <property type="term" value="C:host cell membrane"/>
    <property type="evidence" value="ECO:0007669"/>
    <property type="project" value="UniProtKB-SubCell"/>
</dbReference>
<dbReference type="GO" id="GO:0016020">
    <property type="term" value="C:membrane"/>
    <property type="evidence" value="ECO:0007669"/>
    <property type="project" value="UniProtKB-KW"/>
</dbReference>
<dbReference type="GO" id="GO:0044423">
    <property type="term" value="C:virion component"/>
    <property type="evidence" value="ECO:0007669"/>
    <property type="project" value="UniProtKB-KW"/>
</dbReference>
<feature type="chain" id="PRO_0000373524" description="Uncharacterized protein E146L">
    <location>
        <begin position="1"/>
        <end position="146"/>
    </location>
</feature>
<feature type="transmembrane region" description="Helical" evidence="1">
    <location>
        <begin position="7"/>
        <end position="27"/>
    </location>
</feature>
<accession>Q65197</accession>
<gene>
    <name type="ordered locus">Ba71V-129</name>
    <name type="ORF">E146L</name>
</gene>
<reference key="1">
    <citation type="journal article" date="1995" name="Virology">
        <title>Analysis of the complete nucleotide sequence of African swine fever virus.</title>
        <authorList>
            <person name="Yanez R.J."/>
            <person name="Rodriguez J.M."/>
            <person name="Nogal M.L."/>
            <person name="Yuste L."/>
            <person name="Enriquez C."/>
            <person name="Rodriguez J.F."/>
            <person name="Vinuela E."/>
        </authorList>
    </citation>
    <scope>NUCLEOTIDE SEQUENCE [LARGE SCALE GENOMIC DNA]</scope>
</reference>
<reference key="2">
    <citation type="journal article" date="2018" name="J. Virol.">
        <title>A Proteomic Atlas of the African Swine Fever Virus Particle.</title>
        <authorList>
            <person name="Alejo A."/>
            <person name="Matamoros T."/>
            <person name="Guerra M."/>
            <person name="Andres G."/>
        </authorList>
    </citation>
    <scope>SUBCELLULAR LOCATION</scope>
</reference>
<reference key="3">
    <citation type="journal article" date="2020" name="J. Virol.">
        <title>The African Swine Fever Virus Transcriptome.</title>
        <authorList>
            <person name="Cackett G."/>
            <person name="Matelska D."/>
            <person name="Sykora M."/>
            <person name="Portugal R."/>
            <person name="Malecki M."/>
            <person name="Baehler J."/>
            <person name="Dixon L."/>
            <person name="Werner F."/>
        </authorList>
    </citation>
    <scope>INDUCTION</scope>
</reference>
<organism>
    <name type="scientific">African swine fever virus (strain Badajoz 1971 Vero-adapted)</name>
    <name type="common">Ba71V</name>
    <name type="synonym">ASFV</name>
    <dbReference type="NCBI Taxonomy" id="10498"/>
    <lineage>
        <taxon>Viruses</taxon>
        <taxon>Varidnaviria</taxon>
        <taxon>Bamfordvirae</taxon>
        <taxon>Nucleocytoviricota</taxon>
        <taxon>Pokkesviricetes</taxon>
        <taxon>Asfuvirales</taxon>
        <taxon>Asfarviridae</taxon>
        <taxon>Asfivirus</taxon>
        <taxon>African swine fever virus</taxon>
    </lineage>
</organism>
<keyword id="KW-1043">Host membrane</keyword>
<keyword id="KW-0426">Late protein</keyword>
<keyword id="KW-0472">Membrane</keyword>
<keyword id="KW-1185">Reference proteome</keyword>
<keyword id="KW-0812">Transmembrane</keyword>
<keyword id="KW-1133">Transmembrane helix</keyword>
<keyword id="KW-0946">Virion</keyword>
<proteinExistence type="evidence at transcript level"/>
<evidence type="ECO:0000255" key="1"/>
<evidence type="ECO:0000269" key="2">
    <source>
    </source>
</evidence>
<evidence type="ECO:0000269" key="3">
    <source>
    </source>
</evidence>
<evidence type="ECO:0000305" key="4"/>
<organismHost>
    <name type="scientific">Ornithodoros</name>
    <name type="common">relapsing fever ticks</name>
    <dbReference type="NCBI Taxonomy" id="6937"/>
</organismHost>
<organismHost>
    <name type="scientific">Sus scrofa</name>
    <name type="common">Pig</name>
    <dbReference type="NCBI Taxonomy" id="9823"/>
</organismHost>
<name>VF146_ASFB7</name>
<protein>
    <recommendedName>
        <fullName>Uncharacterized protein E146L</fullName>
        <shortName>pE146L</shortName>
    </recommendedName>
</protein>